<organism>
    <name type="scientific">Catharanthus roseus</name>
    <name type="common">Madagascar periwinkle</name>
    <name type="synonym">Vinca rosea</name>
    <dbReference type="NCBI Taxonomy" id="4058"/>
    <lineage>
        <taxon>Eukaryota</taxon>
        <taxon>Viridiplantae</taxon>
        <taxon>Streptophyta</taxon>
        <taxon>Embryophyta</taxon>
        <taxon>Tracheophyta</taxon>
        <taxon>Spermatophyta</taxon>
        <taxon>Magnoliopsida</taxon>
        <taxon>eudicotyledons</taxon>
        <taxon>Gunneridae</taxon>
        <taxon>Pentapetalae</taxon>
        <taxon>asterids</taxon>
        <taxon>lamiids</taxon>
        <taxon>Gentianales</taxon>
        <taxon>Apocynaceae</taxon>
        <taxon>Rauvolfioideae</taxon>
        <taxon>Vinceae</taxon>
        <taxon>Catharanthinae</taxon>
        <taxon>Catharanthus</taxon>
    </lineage>
</organism>
<dbReference type="EC" id="2.6.1.1"/>
<dbReference type="GO" id="GO:0005759">
    <property type="term" value="C:mitochondrial matrix"/>
    <property type="evidence" value="ECO:0007669"/>
    <property type="project" value="UniProtKB-SubCell"/>
</dbReference>
<dbReference type="GO" id="GO:0005739">
    <property type="term" value="C:mitochondrion"/>
    <property type="evidence" value="ECO:0000250"/>
    <property type="project" value="UniProtKB"/>
</dbReference>
<dbReference type="GO" id="GO:0004069">
    <property type="term" value="F:L-aspartate:2-oxoglutarate aminotransferase activity"/>
    <property type="evidence" value="ECO:0000250"/>
    <property type="project" value="UniProtKB"/>
</dbReference>
<dbReference type="GO" id="GO:0006103">
    <property type="term" value="P:2-oxoglutarate metabolic process"/>
    <property type="evidence" value="ECO:0000250"/>
    <property type="project" value="UniProtKB"/>
</dbReference>
<dbReference type="GO" id="GO:0006531">
    <property type="term" value="P:aspartate metabolic process"/>
    <property type="evidence" value="ECO:0000250"/>
    <property type="project" value="UniProtKB"/>
</dbReference>
<dbReference type="GO" id="GO:0006536">
    <property type="term" value="P:glutamate metabolic process"/>
    <property type="evidence" value="ECO:0000250"/>
    <property type="project" value="UniProtKB"/>
</dbReference>
<reference evidence="4" key="1">
    <citation type="submission" date="2007-10" db="UniProtKB">
        <authorList>
            <person name="Varman P.A.M."/>
            <person name="Ranjitha Kumari B.D."/>
        </authorList>
    </citation>
    <scope>PROTEIN SEQUENCE</scope>
</reference>
<evidence type="ECO:0000250" key="1"/>
<evidence type="ECO:0000250" key="2">
    <source>
        <dbReference type="UniProtKB" id="P00508"/>
    </source>
</evidence>
<evidence type="ECO:0000255" key="3"/>
<evidence type="ECO:0000305" key="4"/>
<feature type="chain" id="PRO_0000312771" description="Aspartate aminotransferase, mitochondrial">
    <location>
        <begin position="1" status="less than"/>
        <end position="28" status="greater than"/>
    </location>
</feature>
<feature type="non-consecutive residues" evidence="4">
    <location>
        <begin position="13"/>
        <end position="14"/>
    </location>
</feature>
<feature type="non-terminal residue">
    <location>
        <position position="1"/>
    </location>
</feature>
<feature type="non-terminal residue">
    <location>
        <position position="28"/>
    </location>
</feature>
<keyword id="KW-0032">Aminotransferase</keyword>
<keyword id="KW-0903">Direct protein sequencing</keyword>
<keyword id="KW-0496">Mitochondrion</keyword>
<keyword id="KW-0663">Pyridoxal phosphate</keyword>
<keyword id="KW-0808">Transferase</keyword>
<sequence>DDNGKPYVLPSVRTCGFDFTGAVEDISK</sequence>
<protein>
    <recommendedName>
        <fullName>Aspartate aminotransferase, mitochondrial</fullName>
        <ecNumber>2.6.1.1</ecNumber>
    </recommendedName>
    <alternativeName>
        <fullName>Glutamate oxaloacetate transaminase 2</fullName>
    </alternativeName>
    <alternativeName>
        <fullName>Transaminase A</fullName>
    </alternativeName>
</protein>
<proteinExistence type="evidence at protein level"/>
<name>AATM_CATRO</name>
<comment type="function">
    <text evidence="1">Plays a key role in amino acid metabolism. Important for metabolite exchange between mitochondria and cytosol (By similarity).</text>
</comment>
<comment type="catalytic activity">
    <reaction evidence="2">
        <text>L-aspartate + 2-oxoglutarate = oxaloacetate + L-glutamate</text>
        <dbReference type="Rhea" id="RHEA:21824"/>
        <dbReference type="ChEBI" id="CHEBI:16452"/>
        <dbReference type="ChEBI" id="CHEBI:16810"/>
        <dbReference type="ChEBI" id="CHEBI:29985"/>
        <dbReference type="ChEBI" id="CHEBI:29991"/>
        <dbReference type="EC" id="2.6.1.1"/>
    </reaction>
</comment>
<comment type="cofactor">
    <cofactor evidence="2">
        <name>pyridoxal 5'-phosphate</name>
        <dbReference type="ChEBI" id="CHEBI:597326"/>
    </cofactor>
</comment>
<comment type="subunit">
    <text evidence="2">Homodimer.</text>
</comment>
<comment type="subcellular location">
    <subcellularLocation>
        <location evidence="2">Mitochondrion matrix</location>
    </subcellularLocation>
</comment>
<comment type="miscellaneous">
    <text evidence="4">In eukaryotes there are cytoplasmic, mitochondrial and chloroplastic isozymes.</text>
</comment>
<comment type="similarity">
    <text evidence="3">Belongs to the class-I pyridoxal-phosphate-dependent aminotransferase family.</text>
</comment>
<accession>P85310</accession>